<dbReference type="EC" id="6.1.1.12" evidence="1"/>
<dbReference type="EMBL" id="AE014299">
    <property type="protein sequence ID" value="AAN55467.1"/>
    <property type="molecule type" value="Genomic_DNA"/>
</dbReference>
<dbReference type="RefSeq" id="NP_718023.1">
    <property type="nucleotide sequence ID" value="NC_004347.2"/>
</dbReference>
<dbReference type="RefSeq" id="WP_011072408.1">
    <property type="nucleotide sequence ID" value="NC_004347.2"/>
</dbReference>
<dbReference type="SMR" id="Q8EEE9"/>
<dbReference type="STRING" id="211586.SO_2433"/>
<dbReference type="PaxDb" id="211586-SO_2433"/>
<dbReference type="KEGG" id="son:SO_2433"/>
<dbReference type="PATRIC" id="fig|211586.12.peg.2340"/>
<dbReference type="eggNOG" id="COG0173">
    <property type="taxonomic scope" value="Bacteria"/>
</dbReference>
<dbReference type="HOGENOM" id="CLU_014330_3_2_6"/>
<dbReference type="OrthoDB" id="9802326at2"/>
<dbReference type="PhylomeDB" id="Q8EEE9"/>
<dbReference type="BioCyc" id="SONE211586:G1GMP-2223-MONOMER"/>
<dbReference type="Proteomes" id="UP000008186">
    <property type="component" value="Chromosome"/>
</dbReference>
<dbReference type="GO" id="GO:0005737">
    <property type="term" value="C:cytoplasm"/>
    <property type="evidence" value="ECO:0007669"/>
    <property type="project" value="UniProtKB-SubCell"/>
</dbReference>
<dbReference type="GO" id="GO:0004815">
    <property type="term" value="F:aspartate-tRNA ligase activity"/>
    <property type="evidence" value="ECO:0000318"/>
    <property type="project" value="GO_Central"/>
</dbReference>
<dbReference type="GO" id="GO:0005524">
    <property type="term" value="F:ATP binding"/>
    <property type="evidence" value="ECO:0007669"/>
    <property type="project" value="UniProtKB-UniRule"/>
</dbReference>
<dbReference type="GO" id="GO:0003676">
    <property type="term" value="F:nucleic acid binding"/>
    <property type="evidence" value="ECO:0007669"/>
    <property type="project" value="InterPro"/>
</dbReference>
<dbReference type="GO" id="GO:0006422">
    <property type="term" value="P:aspartyl-tRNA aminoacylation"/>
    <property type="evidence" value="ECO:0000318"/>
    <property type="project" value="GO_Central"/>
</dbReference>
<dbReference type="CDD" id="cd00777">
    <property type="entry name" value="AspRS_core"/>
    <property type="match status" value="1"/>
</dbReference>
<dbReference type="CDD" id="cd04317">
    <property type="entry name" value="EcAspRS_like_N"/>
    <property type="match status" value="1"/>
</dbReference>
<dbReference type="FunFam" id="2.40.50.140:FF:000080">
    <property type="entry name" value="Aspartate--tRNA ligase"/>
    <property type="match status" value="1"/>
</dbReference>
<dbReference type="Gene3D" id="3.30.930.10">
    <property type="entry name" value="Bira Bifunctional Protein, Domain 2"/>
    <property type="match status" value="1"/>
</dbReference>
<dbReference type="Gene3D" id="3.30.1360.30">
    <property type="entry name" value="GAD-like domain"/>
    <property type="match status" value="1"/>
</dbReference>
<dbReference type="Gene3D" id="2.40.50.140">
    <property type="entry name" value="Nucleic acid-binding proteins"/>
    <property type="match status" value="1"/>
</dbReference>
<dbReference type="HAMAP" id="MF_00044">
    <property type="entry name" value="Asp_tRNA_synth_type1"/>
    <property type="match status" value="1"/>
</dbReference>
<dbReference type="InterPro" id="IPR004364">
    <property type="entry name" value="Aa-tRNA-synt_II"/>
</dbReference>
<dbReference type="InterPro" id="IPR006195">
    <property type="entry name" value="aa-tRNA-synth_II"/>
</dbReference>
<dbReference type="InterPro" id="IPR045864">
    <property type="entry name" value="aa-tRNA-synth_II/BPL/LPL"/>
</dbReference>
<dbReference type="InterPro" id="IPR004524">
    <property type="entry name" value="Asp-tRNA-ligase_1"/>
</dbReference>
<dbReference type="InterPro" id="IPR047089">
    <property type="entry name" value="Asp-tRNA-ligase_1_N"/>
</dbReference>
<dbReference type="InterPro" id="IPR002312">
    <property type="entry name" value="Asp/Asn-tRNA-synth_IIb"/>
</dbReference>
<dbReference type="InterPro" id="IPR047090">
    <property type="entry name" value="AspRS_core"/>
</dbReference>
<dbReference type="InterPro" id="IPR004115">
    <property type="entry name" value="GAD-like_sf"/>
</dbReference>
<dbReference type="InterPro" id="IPR029351">
    <property type="entry name" value="GAD_dom"/>
</dbReference>
<dbReference type="InterPro" id="IPR012340">
    <property type="entry name" value="NA-bd_OB-fold"/>
</dbReference>
<dbReference type="InterPro" id="IPR004365">
    <property type="entry name" value="NA-bd_OB_tRNA"/>
</dbReference>
<dbReference type="NCBIfam" id="TIGR00459">
    <property type="entry name" value="aspS_bact"/>
    <property type="match status" value="1"/>
</dbReference>
<dbReference type="NCBIfam" id="NF001750">
    <property type="entry name" value="PRK00476.1"/>
    <property type="match status" value="1"/>
</dbReference>
<dbReference type="PANTHER" id="PTHR22594:SF5">
    <property type="entry name" value="ASPARTATE--TRNA LIGASE, MITOCHONDRIAL"/>
    <property type="match status" value="1"/>
</dbReference>
<dbReference type="PANTHER" id="PTHR22594">
    <property type="entry name" value="ASPARTYL/LYSYL-TRNA SYNTHETASE"/>
    <property type="match status" value="1"/>
</dbReference>
<dbReference type="Pfam" id="PF02938">
    <property type="entry name" value="GAD"/>
    <property type="match status" value="1"/>
</dbReference>
<dbReference type="Pfam" id="PF00152">
    <property type="entry name" value="tRNA-synt_2"/>
    <property type="match status" value="1"/>
</dbReference>
<dbReference type="Pfam" id="PF01336">
    <property type="entry name" value="tRNA_anti-codon"/>
    <property type="match status" value="1"/>
</dbReference>
<dbReference type="PRINTS" id="PR01042">
    <property type="entry name" value="TRNASYNTHASP"/>
</dbReference>
<dbReference type="SUPFAM" id="SSF55681">
    <property type="entry name" value="Class II aaRS and biotin synthetases"/>
    <property type="match status" value="1"/>
</dbReference>
<dbReference type="SUPFAM" id="SSF55261">
    <property type="entry name" value="GAD domain-like"/>
    <property type="match status" value="1"/>
</dbReference>
<dbReference type="SUPFAM" id="SSF50249">
    <property type="entry name" value="Nucleic acid-binding proteins"/>
    <property type="match status" value="1"/>
</dbReference>
<dbReference type="PROSITE" id="PS50862">
    <property type="entry name" value="AA_TRNA_LIGASE_II"/>
    <property type="match status" value="1"/>
</dbReference>
<gene>
    <name evidence="1" type="primary">aspS</name>
    <name type="ordered locus">SO_2433</name>
</gene>
<keyword id="KW-0030">Aminoacyl-tRNA synthetase</keyword>
<keyword id="KW-0067">ATP-binding</keyword>
<keyword id="KW-0963">Cytoplasm</keyword>
<keyword id="KW-0436">Ligase</keyword>
<keyword id="KW-0547">Nucleotide-binding</keyword>
<keyword id="KW-0648">Protein biosynthesis</keyword>
<keyword id="KW-1185">Reference proteome</keyword>
<comment type="function">
    <text evidence="1">Catalyzes the attachment of L-aspartate to tRNA(Asp) in a two-step reaction: L-aspartate is first activated by ATP to form Asp-AMP and then transferred to the acceptor end of tRNA(Asp).</text>
</comment>
<comment type="catalytic activity">
    <reaction evidence="1">
        <text>tRNA(Asp) + L-aspartate + ATP = L-aspartyl-tRNA(Asp) + AMP + diphosphate</text>
        <dbReference type="Rhea" id="RHEA:19649"/>
        <dbReference type="Rhea" id="RHEA-COMP:9660"/>
        <dbReference type="Rhea" id="RHEA-COMP:9678"/>
        <dbReference type="ChEBI" id="CHEBI:29991"/>
        <dbReference type="ChEBI" id="CHEBI:30616"/>
        <dbReference type="ChEBI" id="CHEBI:33019"/>
        <dbReference type="ChEBI" id="CHEBI:78442"/>
        <dbReference type="ChEBI" id="CHEBI:78516"/>
        <dbReference type="ChEBI" id="CHEBI:456215"/>
        <dbReference type="EC" id="6.1.1.12"/>
    </reaction>
</comment>
<comment type="subunit">
    <text evidence="1">Homodimer.</text>
</comment>
<comment type="subcellular location">
    <subcellularLocation>
        <location evidence="1">Cytoplasm</location>
    </subcellularLocation>
</comment>
<comment type="similarity">
    <text evidence="1">Belongs to the class-II aminoacyl-tRNA synthetase family. Type 1 subfamily.</text>
</comment>
<name>SYD_SHEON</name>
<organism>
    <name type="scientific">Shewanella oneidensis (strain ATCC 700550 / JCM 31522 / CIP 106686 / LMG 19005 / NCIMB 14063 / MR-1)</name>
    <dbReference type="NCBI Taxonomy" id="211586"/>
    <lineage>
        <taxon>Bacteria</taxon>
        <taxon>Pseudomonadati</taxon>
        <taxon>Pseudomonadota</taxon>
        <taxon>Gammaproteobacteria</taxon>
        <taxon>Alteromonadales</taxon>
        <taxon>Shewanellaceae</taxon>
        <taxon>Shewanella</taxon>
    </lineage>
</organism>
<accession>Q8EEE9</accession>
<protein>
    <recommendedName>
        <fullName evidence="1">Aspartate--tRNA ligase</fullName>
        <ecNumber evidence="1">6.1.1.12</ecNumber>
    </recommendedName>
    <alternativeName>
        <fullName evidence="1">Aspartyl-tRNA synthetase</fullName>
        <shortName evidence="1">AspRS</shortName>
    </alternativeName>
</protein>
<reference key="1">
    <citation type="journal article" date="2002" name="Nat. Biotechnol.">
        <title>Genome sequence of the dissimilatory metal ion-reducing bacterium Shewanella oneidensis.</title>
        <authorList>
            <person name="Heidelberg J.F."/>
            <person name="Paulsen I.T."/>
            <person name="Nelson K.E."/>
            <person name="Gaidos E.J."/>
            <person name="Nelson W.C."/>
            <person name="Read T.D."/>
            <person name="Eisen J.A."/>
            <person name="Seshadri R."/>
            <person name="Ward N.L."/>
            <person name="Methe B.A."/>
            <person name="Clayton R.A."/>
            <person name="Meyer T."/>
            <person name="Tsapin A."/>
            <person name="Scott J."/>
            <person name="Beanan M.J."/>
            <person name="Brinkac L.M."/>
            <person name="Daugherty S.C."/>
            <person name="DeBoy R.T."/>
            <person name="Dodson R.J."/>
            <person name="Durkin A.S."/>
            <person name="Haft D.H."/>
            <person name="Kolonay J.F."/>
            <person name="Madupu R."/>
            <person name="Peterson J.D."/>
            <person name="Umayam L.A."/>
            <person name="White O."/>
            <person name="Wolf A.M."/>
            <person name="Vamathevan J.J."/>
            <person name="Weidman J.F."/>
            <person name="Impraim M."/>
            <person name="Lee K."/>
            <person name="Berry K.J."/>
            <person name="Lee C."/>
            <person name="Mueller J."/>
            <person name="Khouri H.M."/>
            <person name="Gill J."/>
            <person name="Utterback T.R."/>
            <person name="McDonald L.A."/>
            <person name="Feldblyum T.V."/>
            <person name="Smith H.O."/>
            <person name="Venter J.C."/>
            <person name="Nealson K.H."/>
            <person name="Fraser C.M."/>
        </authorList>
    </citation>
    <scope>NUCLEOTIDE SEQUENCE [LARGE SCALE GENOMIC DNA]</scope>
    <source>
        <strain>ATCC 700550 / JCM 31522 / CIP 106686 / LMG 19005 / NCIMB 14063 / MR-1</strain>
    </source>
</reference>
<feature type="chain" id="PRO_0000110938" description="Aspartate--tRNA ligase">
    <location>
        <begin position="1"/>
        <end position="591"/>
    </location>
</feature>
<feature type="region of interest" description="Aspartate" evidence="1">
    <location>
        <begin position="197"/>
        <end position="200"/>
    </location>
</feature>
<feature type="binding site" evidence="1">
    <location>
        <position position="173"/>
    </location>
    <ligand>
        <name>L-aspartate</name>
        <dbReference type="ChEBI" id="CHEBI:29991"/>
    </ligand>
</feature>
<feature type="binding site" evidence="1">
    <location>
        <begin position="219"/>
        <end position="221"/>
    </location>
    <ligand>
        <name>ATP</name>
        <dbReference type="ChEBI" id="CHEBI:30616"/>
    </ligand>
</feature>
<feature type="binding site" evidence="1">
    <location>
        <position position="219"/>
    </location>
    <ligand>
        <name>L-aspartate</name>
        <dbReference type="ChEBI" id="CHEBI:29991"/>
    </ligand>
</feature>
<feature type="binding site" evidence="1">
    <location>
        <position position="228"/>
    </location>
    <ligand>
        <name>ATP</name>
        <dbReference type="ChEBI" id="CHEBI:30616"/>
    </ligand>
</feature>
<feature type="binding site" evidence="1">
    <location>
        <position position="448"/>
    </location>
    <ligand>
        <name>L-aspartate</name>
        <dbReference type="ChEBI" id="CHEBI:29991"/>
    </ligand>
</feature>
<feature type="binding site" evidence="1">
    <location>
        <position position="482"/>
    </location>
    <ligand>
        <name>ATP</name>
        <dbReference type="ChEBI" id="CHEBI:30616"/>
    </ligand>
</feature>
<feature type="binding site" evidence="1">
    <location>
        <position position="489"/>
    </location>
    <ligand>
        <name>L-aspartate</name>
        <dbReference type="ChEBI" id="CHEBI:29991"/>
    </ligand>
</feature>
<feature type="binding site" evidence="1">
    <location>
        <begin position="534"/>
        <end position="537"/>
    </location>
    <ligand>
        <name>ATP</name>
        <dbReference type="ChEBI" id="CHEBI:30616"/>
    </ligand>
</feature>
<proteinExistence type="inferred from homology"/>
<evidence type="ECO:0000255" key="1">
    <source>
        <dbReference type="HAMAP-Rule" id="MF_00044"/>
    </source>
</evidence>
<sequence length="591" mass="66076">MRSHYCGDVNKSHVGQEVTLVGWVNRSRDLGGVVFLDLRDREGLVQVVYDPDLPEVFNVASTLRAEFCVQVKGVVRARPDSQVNAQMKTGEIEVLGKALTIINSSEPLPLSLDNYQNNSEEQRLKYRYLDLRRPEMAQRLMFRAKVTSAVRRFLDSNGFLDIETPILTKATPEGARDYLVPSRTYKGQFFALPQSPQLFKQLLMMSGFDRYYQIVKCFRDEDLRADRQPEFTQIDIETSFMTSEQVMNKTEEMMRGLFLEMLNVDLGEFPRMTYNEAMRRFGSDKPDLRNPLELVDVADLLKDVEFAVFSGPANDEEGRVAALRIPGGASLSRKQIDDYTKFVGIYGAKGLAWMKLNDLTQGLEGIQSPVLKFLNENIVNEIINRTGAQTGDIILFGADQATVVAESMGALRLKAGEDFNLLEGQWRPLWVVDFPMFEKINGSFHAVHHPFTAPRGVTPQELEANPANRVSDAYDMVLNGCELGGGSVRIHNQEMQSAVFRILGITDEEAKEKFGFLLEALRYGTPPHAGLAFGLDRIIMLMTGASSIRDVMAFPKTTTAACPLTNAPGFANPQQLAELGIAVVKTAKTED</sequence>